<evidence type="ECO:0000255" key="1">
    <source>
        <dbReference type="HAMAP-Rule" id="MF_00649"/>
    </source>
</evidence>
<sequence>MTTKTTDETFTVDCPICKKAVIWSPQSPYRPFCSKRCQLIDLGEWAAEEKAIPCENADFAMDPENNEDWAKH</sequence>
<gene>
    <name evidence="1" type="primary">yacG</name>
    <name type="ordered locus">MS0358</name>
</gene>
<proteinExistence type="inferred from homology"/>
<accession>Q65VP5</accession>
<reference key="1">
    <citation type="journal article" date="2004" name="Nat. Biotechnol.">
        <title>The genome sequence of the capnophilic rumen bacterium Mannheimia succiniciproducens.</title>
        <authorList>
            <person name="Hong S.H."/>
            <person name="Kim J.S."/>
            <person name="Lee S.Y."/>
            <person name="In Y.H."/>
            <person name="Choi S.S."/>
            <person name="Rih J.-K."/>
            <person name="Kim C.H."/>
            <person name="Jeong H."/>
            <person name="Hur C.G."/>
            <person name="Kim J.J."/>
        </authorList>
    </citation>
    <scope>NUCLEOTIDE SEQUENCE [LARGE SCALE GENOMIC DNA]</scope>
    <source>
        <strain>KCTC 0769BP / MBEL55E</strain>
    </source>
</reference>
<organism>
    <name type="scientific">Mannheimia succiniciproducens (strain KCTC 0769BP / MBEL55E)</name>
    <dbReference type="NCBI Taxonomy" id="221988"/>
    <lineage>
        <taxon>Bacteria</taxon>
        <taxon>Pseudomonadati</taxon>
        <taxon>Pseudomonadota</taxon>
        <taxon>Gammaproteobacteria</taxon>
        <taxon>Pasteurellales</taxon>
        <taxon>Pasteurellaceae</taxon>
        <taxon>Basfia</taxon>
    </lineage>
</organism>
<comment type="function">
    <text evidence="1">Inhibits all the catalytic activities of DNA gyrase by preventing its interaction with DNA. Acts by binding directly to the C-terminal domain of GyrB, which probably disrupts DNA binding by the gyrase.</text>
</comment>
<comment type="cofactor">
    <cofactor evidence="1">
        <name>Zn(2+)</name>
        <dbReference type="ChEBI" id="CHEBI:29105"/>
    </cofactor>
    <text evidence="1">Binds 1 zinc ion.</text>
</comment>
<comment type="subunit">
    <text evidence="1">Interacts with GyrB.</text>
</comment>
<comment type="similarity">
    <text evidence="1">Belongs to the DNA gyrase inhibitor YacG family.</text>
</comment>
<protein>
    <recommendedName>
        <fullName evidence="1">DNA gyrase inhibitor YacG</fullName>
    </recommendedName>
</protein>
<dbReference type="EMBL" id="AE016827">
    <property type="protein sequence ID" value="AAU36965.1"/>
    <property type="molecule type" value="Genomic_DNA"/>
</dbReference>
<dbReference type="RefSeq" id="WP_011199540.1">
    <property type="nucleotide sequence ID" value="NC_006300.1"/>
</dbReference>
<dbReference type="SMR" id="Q65VP5"/>
<dbReference type="STRING" id="221988.MS0358"/>
<dbReference type="KEGG" id="msu:MS0358"/>
<dbReference type="eggNOG" id="COG3024">
    <property type="taxonomic scope" value="Bacteria"/>
</dbReference>
<dbReference type="HOGENOM" id="CLU_178280_3_1_6"/>
<dbReference type="OrthoDB" id="9809663at2"/>
<dbReference type="Proteomes" id="UP000000607">
    <property type="component" value="Chromosome"/>
</dbReference>
<dbReference type="GO" id="GO:0008657">
    <property type="term" value="F:DNA topoisomerase type II (double strand cut, ATP-hydrolyzing) inhibitor activity"/>
    <property type="evidence" value="ECO:0007669"/>
    <property type="project" value="UniProtKB-UniRule"/>
</dbReference>
<dbReference type="GO" id="GO:0008270">
    <property type="term" value="F:zinc ion binding"/>
    <property type="evidence" value="ECO:0007669"/>
    <property type="project" value="UniProtKB-UniRule"/>
</dbReference>
<dbReference type="GO" id="GO:0006355">
    <property type="term" value="P:regulation of DNA-templated transcription"/>
    <property type="evidence" value="ECO:0007669"/>
    <property type="project" value="InterPro"/>
</dbReference>
<dbReference type="Gene3D" id="3.30.50.10">
    <property type="entry name" value="Erythroid Transcription Factor GATA-1, subunit A"/>
    <property type="match status" value="1"/>
</dbReference>
<dbReference type="HAMAP" id="MF_00649">
    <property type="entry name" value="DNA_gyrase_inhibitor_YacG"/>
    <property type="match status" value="1"/>
</dbReference>
<dbReference type="InterPro" id="IPR005584">
    <property type="entry name" value="DNA_gyrase_inhibitor_YacG"/>
</dbReference>
<dbReference type="InterPro" id="IPR013088">
    <property type="entry name" value="Znf_NHR/GATA"/>
</dbReference>
<dbReference type="NCBIfam" id="NF001638">
    <property type="entry name" value="PRK00418.1"/>
    <property type="match status" value="1"/>
</dbReference>
<dbReference type="PANTHER" id="PTHR36150">
    <property type="entry name" value="DNA GYRASE INHIBITOR YACG"/>
    <property type="match status" value="1"/>
</dbReference>
<dbReference type="PANTHER" id="PTHR36150:SF1">
    <property type="entry name" value="DNA GYRASE INHIBITOR YACG"/>
    <property type="match status" value="1"/>
</dbReference>
<dbReference type="Pfam" id="PF03884">
    <property type="entry name" value="YacG"/>
    <property type="match status" value="1"/>
</dbReference>
<dbReference type="SUPFAM" id="SSF57716">
    <property type="entry name" value="Glucocorticoid receptor-like (DNA-binding domain)"/>
    <property type="match status" value="1"/>
</dbReference>
<keyword id="KW-0479">Metal-binding</keyword>
<keyword id="KW-0862">Zinc</keyword>
<feature type="chain" id="PRO_0000211706" description="DNA gyrase inhibitor YacG">
    <location>
        <begin position="1"/>
        <end position="72"/>
    </location>
</feature>
<feature type="binding site" evidence="1">
    <location>
        <position position="14"/>
    </location>
    <ligand>
        <name>Zn(2+)</name>
        <dbReference type="ChEBI" id="CHEBI:29105"/>
    </ligand>
</feature>
<feature type="binding site" evidence="1">
    <location>
        <position position="17"/>
    </location>
    <ligand>
        <name>Zn(2+)</name>
        <dbReference type="ChEBI" id="CHEBI:29105"/>
    </ligand>
</feature>
<feature type="binding site" evidence="1">
    <location>
        <position position="33"/>
    </location>
    <ligand>
        <name>Zn(2+)</name>
        <dbReference type="ChEBI" id="CHEBI:29105"/>
    </ligand>
</feature>
<feature type="binding site" evidence="1">
    <location>
        <position position="37"/>
    </location>
    <ligand>
        <name>Zn(2+)</name>
        <dbReference type="ChEBI" id="CHEBI:29105"/>
    </ligand>
</feature>
<name>YACG_MANSM</name>